<accession>P57876</accession>
<dbReference type="EC" id="2.1.3.3"/>
<dbReference type="EMBL" id="AE004439">
    <property type="protein sequence ID" value="AAK02892.1"/>
    <property type="molecule type" value="Genomic_DNA"/>
</dbReference>
<dbReference type="RefSeq" id="WP_005722475.1">
    <property type="nucleotide sequence ID" value="NC_002663.1"/>
</dbReference>
<dbReference type="SMR" id="P57876"/>
<dbReference type="STRING" id="272843.PM0808"/>
<dbReference type="EnsemblBacteria" id="AAK02892">
    <property type="protein sequence ID" value="AAK02892"/>
    <property type="gene ID" value="PM0808"/>
</dbReference>
<dbReference type="KEGG" id="pmu:PM0808"/>
<dbReference type="HOGENOM" id="CLU_043846_3_1_6"/>
<dbReference type="OrthoDB" id="9802587at2"/>
<dbReference type="UniPathway" id="UPA00068">
    <property type="reaction ID" value="UER00112"/>
</dbReference>
<dbReference type="Proteomes" id="UP000000809">
    <property type="component" value="Chromosome"/>
</dbReference>
<dbReference type="GO" id="GO:0005737">
    <property type="term" value="C:cytoplasm"/>
    <property type="evidence" value="ECO:0007669"/>
    <property type="project" value="UniProtKB-SubCell"/>
</dbReference>
<dbReference type="GO" id="GO:0016597">
    <property type="term" value="F:amino acid binding"/>
    <property type="evidence" value="ECO:0007669"/>
    <property type="project" value="InterPro"/>
</dbReference>
<dbReference type="GO" id="GO:0004585">
    <property type="term" value="F:ornithine carbamoyltransferase activity"/>
    <property type="evidence" value="ECO:0007669"/>
    <property type="project" value="UniProtKB-UniRule"/>
</dbReference>
<dbReference type="GO" id="GO:0042450">
    <property type="term" value="P:arginine biosynthetic process via ornithine"/>
    <property type="evidence" value="ECO:0007669"/>
    <property type="project" value="TreeGrafter"/>
</dbReference>
<dbReference type="GO" id="GO:0019240">
    <property type="term" value="P:citrulline biosynthetic process"/>
    <property type="evidence" value="ECO:0007669"/>
    <property type="project" value="TreeGrafter"/>
</dbReference>
<dbReference type="GO" id="GO:0006526">
    <property type="term" value="P:L-arginine biosynthetic process"/>
    <property type="evidence" value="ECO:0007669"/>
    <property type="project" value="UniProtKB-UniRule"/>
</dbReference>
<dbReference type="FunFam" id="3.40.50.1370:FF:000004">
    <property type="entry name" value="Ornithine carbamoyltransferase"/>
    <property type="match status" value="1"/>
</dbReference>
<dbReference type="Gene3D" id="3.40.50.1370">
    <property type="entry name" value="Aspartate/ornithine carbamoyltransferase"/>
    <property type="match status" value="2"/>
</dbReference>
<dbReference type="HAMAP" id="MF_01109">
    <property type="entry name" value="OTCase"/>
    <property type="match status" value="1"/>
</dbReference>
<dbReference type="InterPro" id="IPR006132">
    <property type="entry name" value="Asp/Orn_carbamoyltranf_P-bd"/>
</dbReference>
<dbReference type="InterPro" id="IPR006130">
    <property type="entry name" value="Asp/Orn_carbamoylTrfase"/>
</dbReference>
<dbReference type="InterPro" id="IPR036901">
    <property type="entry name" value="Asp/Orn_carbamoylTrfase_sf"/>
</dbReference>
<dbReference type="InterPro" id="IPR006131">
    <property type="entry name" value="Asp_carbamoyltransf_Asp/Orn-bd"/>
</dbReference>
<dbReference type="InterPro" id="IPR002292">
    <property type="entry name" value="Orn/put_carbamltrans"/>
</dbReference>
<dbReference type="InterPro" id="IPR024904">
    <property type="entry name" value="OTCase_ArgI"/>
</dbReference>
<dbReference type="NCBIfam" id="TIGR00658">
    <property type="entry name" value="orni_carb_tr"/>
    <property type="match status" value="1"/>
</dbReference>
<dbReference type="NCBIfam" id="NF003286">
    <property type="entry name" value="PRK04284.1"/>
    <property type="match status" value="1"/>
</dbReference>
<dbReference type="NCBIfam" id="NF009213">
    <property type="entry name" value="PRK12562.1"/>
    <property type="match status" value="1"/>
</dbReference>
<dbReference type="PANTHER" id="PTHR45753:SF2">
    <property type="entry name" value="ORNITHINE CARBAMOYLTRANSFERASE"/>
    <property type="match status" value="1"/>
</dbReference>
<dbReference type="PANTHER" id="PTHR45753">
    <property type="entry name" value="ORNITHINE CARBAMOYLTRANSFERASE, MITOCHONDRIAL"/>
    <property type="match status" value="1"/>
</dbReference>
<dbReference type="Pfam" id="PF00185">
    <property type="entry name" value="OTCace"/>
    <property type="match status" value="1"/>
</dbReference>
<dbReference type="Pfam" id="PF02729">
    <property type="entry name" value="OTCace_N"/>
    <property type="match status" value="1"/>
</dbReference>
<dbReference type="PRINTS" id="PR00100">
    <property type="entry name" value="AOTCASE"/>
</dbReference>
<dbReference type="PRINTS" id="PR00102">
    <property type="entry name" value="OTCASE"/>
</dbReference>
<dbReference type="SUPFAM" id="SSF53671">
    <property type="entry name" value="Aspartate/ornithine carbamoyltransferase"/>
    <property type="match status" value="1"/>
</dbReference>
<dbReference type="PROSITE" id="PS00097">
    <property type="entry name" value="CARBAMOYLTRANSFERASE"/>
    <property type="match status" value="1"/>
</dbReference>
<organism>
    <name type="scientific">Pasteurella multocida (strain Pm70)</name>
    <dbReference type="NCBI Taxonomy" id="272843"/>
    <lineage>
        <taxon>Bacteria</taxon>
        <taxon>Pseudomonadati</taxon>
        <taxon>Pseudomonadota</taxon>
        <taxon>Gammaproteobacteria</taxon>
        <taxon>Pasteurellales</taxon>
        <taxon>Pasteurellaceae</taxon>
        <taxon>Pasteurella</taxon>
    </lineage>
</organism>
<sequence>MPLNLRHRHFLRLMDFTPTEIQFLLDLSANLKKAKYTGTEQPRLKGKNIALIFEKTSTRTRCSFEVAAYDQGANVTYIGPSGSQIGHKESMKDTARVLGRMYDGIQYRGYGQELVEILAQYSGVPVWNGLTDDFHPTQILADFLTMLEHGEGKRLNQMKMAYLGDARNNMGNSFVEGAALMGMDLRLVAPKAYWPEQKLLDEVAEMAKKTGAKITCTENVEEGVKGVDFLYTDIWVSMGEPEEAWEQRINLMKPYQVNKALLEKTGNPKVKFMHCLPAFHDENTTVGKEMAQKYGMNGLEVTDEVFESDASIVFDEAENRMHTIKAVMVATLGQ</sequence>
<protein>
    <recommendedName>
        <fullName>Ornithine carbamoyltransferase</fullName>
        <shortName>OTCase</shortName>
        <ecNumber>2.1.3.3</ecNumber>
    </recommendedName>
</protein>
<evidence type="ECO:0000250" key="1"/>
<evidence type="ECO:0000255" key="2">
    <source>
        <dbReference type="HAMAP-Rule" id="MF_01109"/>
    </source>
</evidence>
<evidence type="ECO:0000305" key="3"/>
<proteinExistence type="inferred from homology"/>
<comment type="function">
    <text evidence="1">Reversibly catalyzes the transfer of the carbamoyl group from carbamoyl phosphate (CP) to the N(epsilon) atom of ornithine (ORN) to produce L-citrulline.</text>
</comment>
<comment type="catalytic activity">
    <reaction>
        <text>carbamoyl phosphate + L-ornithine = L-citrulline + phosphate + H(+)</text>
        <dbReference type="Rhea" id="RHEA:19513"/>
        <dbReference type="ChEBI" id="CHEBI:15378"/>
        <dbReference type="ChEBI" id="CHEBI:43474"/>
        <dbReference type="ChEBI" id="CHEBI:46911"/>
        <dbReference type="ChEBI" id="CHEBI:57743"/>
        <dbReference type="ChEBI" id="CHEBI:58228"/>
        <dbReference type="EC" id="2.1.3.3"/>
    </reaction>
</comment>
<comment type="pathway">
    <text>Amino-acid biosynthesis; L-arginine biosynthesis; L-arginine from L-ornithine and carbamoyl phosphate: step 1/3.</text>
</comment>
<comment type="subcellular location">
    <subcellularLocation>
        <location evidence="1">Cytoplasm</location>
    </subcellularLocation>
</comment>
<comment type="similarity">
    <text evidence="3">Belongs to the aspartate/ornithine carbamoyltransferase superfamily. OTCase family.</text>
</comment>
<gene>
    <name type="primary">argF</name>
    <name type="ordered locus">PM0808</name>
</gene>
<reference key="1">
    <citation type="journal article" date="2001" name="Proc. Natl. Acad. Sci. U.S.A.">
        <title>Complete genomic sequence of Pasteurella multocida Pm70.</title>
        <authorList>
            <person name="May B.J."/>
            <person name="Zhang Q."/>
            <person name="Li L.L."/>
            <person name="Paustian M.L."/>
            <person name="Whittam T.S."/>
            <person name="Kapur V."/>
        </authorList>
    </citation>
    <scope>NUCLEOTIDE SEQUENCE [LARGE SCALE GENOMIC DNA]</scope>
    <source>
        <strain>Pm70</strain>
    </source>
</reference>
<feature type="chain" id="PRO_0000112977" description="Ornithine carbamoyltransferase">
    <location>
        <begin position="1"/>
        <end position="334"/>
    </location>
</feature>
<feature type="binding site" evidence="2">
    <location>
        <begin position="57"/>
        <end position="60"/>
    </location>
    <ligand>
        <name>carbamoyl phosphate</name>
        <dbReference type="ChEBI" id="CHEBI:58228"/>
    </ligand>
</feature>
<feature type="binding site" evidence="2">
    <location>
        <position position="84"/>
    </location>
    <ligand>
        <name>carbamoyl phosphate</name>
        <dbReference type="ChEBI" id="CHEBI:58228"/>
    </ligand>
</feature>
<feature type="binding site" evidence="2">
    <location>
        <position position="108"/>
    </location>
    <ligand>
        <name>carbamoyl phosphate</name>
        <dbReference type="ChEBI" id="CHEBI:58228"/>
    </ligand>
</feature>
<feature type="binding site" evidence="2">
    <location>
        <begin position="135"/>
        <end position="138"/>
    </location>
    <ligand>
        <name>carbamoyl phosphate</name>
        <dbReference type="ChEBI" id="CHEBI:58228"/>
    </ligand>
</feature>
<feature type="binding site" evidence="2">
    <location>
        <position position="169"/>
    </location>
    <ligand>
        <name>L-ornithine</name>
        <dbReference type="ChEBI" id="CHEBI:46911"/>
    </ligand>
</feature>
<feature type="binding site" evidence="2">
    <location>
        <position position="233"/>
    </location>
    <ligand>
        <name>L-ornithine</name>
        <dbReference type="ChEBI" id="CHEBI:46911"/>
    </ligand>
</feature>
<feature type="binding site" evidence="2">
    <location>
        <begin position="237"/>
        <end position="238"/>
    </location>
    <ligand>
        <name>L-ornithine</name>
        <dbReference type="ChEBI" id="CHEBI:46911"/>
    </ligand>
</feature>
<feature type="binding site" evidence="2">
    <location>
        <begin position="275"/>
        <end position="276"/>
    </location>
    <ligand>
        <name>carbamoyl phosphate</name>
        <dbReference type="ChEBI" id="CHEBI:58228"/>
    </ligand>
</feature>
<feature type="binding site" evidence="2">
    <location>
        <position position="320"/>
    </location>
    <ligand>
        <name>carbamoyl phosphate</name>
        <dbReference type="ChEBI" id="CHEBI:58228"/>
    </ligand>
</feature>
<name>OTC_PASMU</name>
<keyword id="KW-0028">Amino-acid biosynthesis</keyword>
<keyword id="KW-0055">Arginine biosynthesis</keyword>
<keyword id="KW-0963">Cytoplasm</keyword>
<keyword id="KW-1185">Reference proteome</keyword>
<keyword id="KW-0808">Transferase</keyword>